<name>NMT_MIMIV</name>
<keyword id="KW-0012">Acyltransferase</keyword>
<keyword id="KW-1185">Reference proteome</keyword>
<keyword id="KW-0808">Transferase</keyword>
<proteinExistence type="inferred from homology"/>
<organismHost>
    <name type="scientific">Acanthamoeba polyphaga</name>
    <name type="common">Amoeba</name>
    <dbReference type="NCBI Taxonomy" id="5757"/>
</organismHost>
<protein>
    <recommendedName>
        <fullName>Putative glycylpeptide N-tetradecanoyltransferase</fullName>
        <ecNumber>2.3.1.97</ecNumber>
    </recommendedName>
    <alternativeName>
        <fullName>Myristoyl-CoA:protein N-myristoyltransferase</fullName>
        <shortName>NMT</shortName>
    </alternativeName>
    <alternativeName>
        <fullName>Peptide N-myristoyltransferase</fullName>
    </alternativeName>
</protein>
<reference key="1">
    <citation type="journal article" date="2004" name="Science">
        <title>The 1.2-megabase genome sequence of Mimivirus.</title>
        <authorList>
            <person name="Raoult D."/>
            <person name="Audic S."/>
            <person name="Robert C."/>
            <person name="Abergel C."/>
            <person name="Renesto P."/>
            <person name="Ogata H."/>
            <person name="La Scola B."/>
            <person name="Susan M."/>
            <person name="Claverie J.-M."/>
        </authorList>
    </citation>
    <scope>NUCLEOTIDE SEQUENCE [LARGE SCALE GENOMIC DNA]</scope>
    <source>
        <strain>Rowbotham-Bradford</strain>
    </source>
</reference>
<organism>
    <name type="scientific">Acanthamoeba polyphaga mimivirus</name>
    <name type="common">APMV</name>
    <dbReference type="NCBI Taxonomy" id="212035"/>
    <lineage>
        <taxon>Viruses</taxon>
        <taxon>Varidnaviria</taxon>
        <taxon>Bamfordvirae</taxon>
        <taxon>Nucleocytoviricota</taxon>
        <taxon>Megaviricetes</taxon>
        <taxon>Imitervirales</taxon>
        <taxon>Mimiviridae</taxon>
        <taxon>Megamimivirinae</taxon>
        <taxon>Mimivirus</taxon>
        <taxon>Mimivirus bradfordmassiliense</taxon>
    </lineage>
</organism>
<gene>
    <name type="ordered locus">MIMI_L621</name>
</gene>
<sequence>MSNLNLFETNQNKSISIMTQDITKLLDPLTEKFDGFSIKTLNVKHVDEIHELLNKHYIEDNDHIIRIIYSRDFLYWYLKYVPNNFTIGLMYKNKLVGLITALFVDMIMYDNKIKIPYINFFCIQNKIRKFGLSNILIEELKSRLLKIGVAYSLFTRMNCQNSLDKHFTSTIDFAIPINCPKLKSVGFIPDDEKLMNWKIENNPLSLMVKTDILSVTSKLNVHLQHLSVRPYLTEDSVHHFILPKKNIVYTFVKRDSRGYVTDMVSVYKHYAYILETGKIISNAQLSFYYNETMDLTQLILLLLDKLINYGFDQLIFRNFYDNGKINITRFETNGELNYYAGNISMPITCPNNMFMIPI</sequence>
<feature type="chain" id="PRO_0000064251" description="Putative glycylpeptide N-tetradecanoyltransferase">
    <location>
        <begin position="1"/>
        <end position="358"/>
    </location>
</feature>
<evidence type="ECO:0000305" key="1"/>
<dbReference type="EC" id="2.3.1.97"/>
<dbReference type="EMBL" id="AY653733">
    <property type="protein sequence ID" value="AAV50882.1"/>
    <property type="molecule type" value="Genomic_DNA"/>
</dbReference>
<dbReference type="SMR" id="Q5UR64"/>
<dbReference type="KEGG" id="vg:9925262"/>
<dbReference type="OrthoDB" id="10632at10239"/>
<dbReference type="Proteomes" id="UP000001134">
    <property type="component" value="Genome"/>
</dbReference>
<dbReference type="GO" id="GO:0004379">
    <property type="term" value="F:glycylpeptide N-tetradecanoyltransferase activity"/>
    <property type="evidence" value="ECO:0007669"/>
    <property type="project" value="UniProtKB-EC"/>
</dbReference>
<dbReference type="Gene3D" id="3.40.630.170">
    <property type="match status" value="1"/>
</dbReference>
<dbReference type="InterPro" id="IPR016181">
    <property type="entry name" value="Acyl_CoA_acyltransferase"/>
</dbReference>
<dbReference type="InterPro" id="IPR000903">
    <property type="entry name" value="NMT"/>
</dbReference>
<dbReference type="InterPro" id="IPR022677">
    <property type="entry name" value="NMT_C"/>
</dbReference>
<dbReference type="InterPro" id="IPR022676">
    <property type="entry name" value="NMT_N"/>
</dbReference>
<dbReference type="PANTHER" id="PTHR11377:SF5">
    <property type="entry name" value="GLYCYLPEPTIDE N-TETRADECANOYLTRANSFERASE"/>
    <property type="match status" value="1"/>
</dbReference>
<dbReference type="PANTHER" id="PTHR11377">
    <property type="entry name" value="N-MYRISTOYL TRANSFERASE"/>
    <property type="match status" value="1"/>
</dbReference>
<dbReference type="Pfam" id="PF01233">
    <property type="entry name" value="NMT"/>
    <property type="match status" value="1"/>
</dbReference>
<dbReference type="Pfam" id="PF02799">
    <property type="entry name" value="NMT_C"/>
    <property type="match status" value="1"/>
</dbReference>
<dbReference type="SUPFAM" id="SSF55729">
    <property type="entry name" value="Acyl-CoA N-acyltransferases (Nat)"/>
    <property type="match status" value="2"/>
</dbReference>
<accession>Q5UR64</accession>
<comment type="function">
    <text evidence="1">Adds a myristoyl group to the N-terminal glycine residue of certain proteins.</text>
</comment>
<comment type="catalytic activity">
    <reaction>
        <text>N-terminal glycyl-[protein] + tetradecanoyl-CoA = N-tetradecanoylglycyl-[protein] + CoA + H(+)</text>
        <dbReference type="Rhea" id="RHEA:15521"/>
        <dbReference type="Rhea" id="RHEA-COMP:12666"/>
        <dbReference type="Rhea" id="RHEA-COMP:12667"/>
        <dbReference type="ChEBI" id="CHEBI:15378"/>
        <dbReference type="ChEBI" id="CHEBI:57287"/>
        <dbReference type="ChEBI" id="CHEBI:57385"/>
        <dbReference type="ChEBI" id="CHEBI:64723"/>
        <dbReference type="ChEBI" id="CHEBI:133050"/>
        <dbReference type="EC" id="2.3.1.97"/>
    </reaction>
</comment>
<comment type="similarity">
    <text evidence="1">Belongs to the NMT family.</text>
</comment>